<gene>
    <name type="ORF">DDB_G0287283</name>
</gene>
<protein>
    <recommendedName>
        <fullName>Putative uncharacterized protein DDB_G0287283</fullName>
    </recommendedName>
</protein>
<feature type="chain" id="PRO_0000347033" description="Putative uncharacterized protein DDB_G0287283">
    <location>
        <begin position="1"/>
        <end position="50"/>
    </location>
</feature>
<accession>Q54KK8</accession>
<proteinExistence type="predicted"/>
<dbReference type="EMBL" id="AAFI02000099">
    <property type="protein sequence ID" value="EAL63803.1"/>
    <property type="molecule type" value="Genomic_DNA"/>
</dbReference>
<dbReference type="RefSeq" id="XP_637309.1">
    <property type="nucleotide sequence ID" value="XM_632217.1"/>
</dbReference>
<dbReference type="PaxDb" id="44689-DDB0187397"/>
<dbReference type="EnsemblProtists" id="EAL63803">
    <property type="protein sequence ID" value="EAL63803"/>
    <property type="gene ID" value="DDB_G0287283"/>
</dbReference>
<dbReference type="GeneID" id="8626046"/>
<dbReference type="KEGG" id="ddi:DDB_G0287283"/>
<dbReference type="dictyBase" id="DDB_G0287283"/>
<dbReference type="VEuPathDB" id="AmoebaDB:DDB_G0287283"/>
<dbReference type="HOGENOM" id="CLU_3128241_0_0_1"/>
<dbReference type="InParanoid" id="Q54KK8"/>
<dbReference type="PRO" id="PR:Q54KK8"/>
<dbReference type="Proteomes" id="UP000002195">
    <property type="component" value="Chromosome 5"/>
</dbReference>
<keyword id="KW-1185">Reference proteome</keyword>
<organism>
    <name type="scientific">Dictyostelium discoideum</name>
    <name type="common">Social amoeba</name>
    <dbReference type="NCBI Taxonomy" id="44689"/>
    <lineage>
        <taxon>Eukaryota</taxon>
        <taxon>Amoebozoa</taxon>
        <taxon>Evosea</taxon>
        <taxon>Eumycetozoa</taxon>
        <taxon>Dictyostelia</taxon>
        <taxon>Dictyosteliales</taxon>
        <taxon>Dictyosteliaceae</taxon>
        <taxon>Dictyostelium</taxon>
    </lineage>
</organism>
<reference key="1">
    <citation type="journal article" date="2005" name="Nature">
        <title>The genome of the social amoeba Dictyostelium discoideum.</title>
        <authorList>
            <person name="Eichinger L."/>
            <person name="Pachebat J.A."/>
            <person name="Gloeckner G."/>
            <person name="Rajandream M.A."/>
            <person name="Sucgang R."/>
            <person name="Berriman M."/>
            <person name="Song J."/>
            <person name="Olsen R."/>
            <person name="Szafranski K."/>
            <person name="Xu Q."/>
            <person name="Tunggal B."/>
            <person name="Kummerfeld S."/>
            <person name="Madera M."/>
            <person name="Konfortov B.A."/>
            <person name="Rivero F."/>
            <person name="Bankier A.T."/>
            <person name="Lehmann R."/>
            <person name="Hamlin N."/>
            <person name="Davies R."/>
            <person name="Gaudet P."/>
            <person name="Fey P."/>
            <person name="Pilcher K."/>
            <person name="Chen G."/>
            <person name="Saunders D."/>
            <person name="Sodergren E.J."/>
            <person name="Davis P."/>
            <person name="Kerhornou A."/>
            <person name="Nie X."/>
            <person name="Hall N."/>
            <person name="Anjard C."/>
            <person name="Hemphill L."/>
            <person name="Bason N."/>
            <person name="Farbrother P."/>
            <person name="Desany B."/>
            <person name="Just E."/>
            <person name="Morio T."/>
            <person name="Rost R."/>
            <person name="Churcher C.M."/>
            <person name="Cooper J."/>
            <person name="Haydock S."/>
            <person name="van Driessche N."/>
            <person name="Cronin A."/>
            <person name="Goodhead I."/>
            <person name="Muzny D.M."/>
            <person name="Mourier T."/>
            <person name="Pain A."/>
            <person name="Lu M."/>
            <person name="Harper D."/>
            <person name="Lindsay R."/>
            <person name="Hauser H."/>
            <person name="James K.D."/>
            <person name="Quiles M."/>
            <person name="Madan Babu M."/>
            <person name="Saito T."/>
            <person name="Buchrieser C."/>
            <person name="Wardroper A."/>
            <person name="Felder M."/>
            <person name="Thangavelu M."/>
            <person name="Johnson D."/>
            <person name="Knights A."/>
            <person name="Loulseged H."/>
            <person name="Mungall K.L."/>
            <person name="Oliver K."/>
            <person name="Price C."/>
            <person name="Quail M.A."/>
            <person name="Urushihara H."/>
            <person name="Hernandez J."/>
            <person name="Rabbinowitsch E."/>
            <person name="Steffen D."/>
            <person name="Sanders M."/>
            <person name="Ma J."/>
            <person name="Kohara Y."/>
            <person name="Sharp S."/>
            <person name="Simmonds M.N."/>
            <person name="Spiegler S."/>
            <person name="Tivey A."/>
            <person name="Sugano S."/>
            <person name="White B."/>
            <person name="Walker D."/>
            <person name="Woodward J.R."/>
            <person name="Winckler T."/>
            <person name="Tanaka Y."/>
            <person name="Shaulsky G."/>
            <person name="Schleicher M."/>
            <person name="Weinstock G.M."/>
            <person name="Rosenthal A."/>
            <person name="Cox E.C."/>
            <person name="Chisholm R.L."/>
            <person name="Gibbs R.A."/>
            <person name="Loomis W.F."/>
            <person name="Platzer M."/>
            <person name="Kay R.R."/>
            <person name="Williams J.G."/>
            <person name="Dear P.H."/>
            <person name="Noegel A.A."/>
            <person name="Barrell B.G."/>
            <person name="Kuspa A."/>
        </authorList>
    </citation>
    <scope>NUCLEOTIDE SEQUENCE [LARGE SCALE GENOMIC DNA]</scope>
    <source>
        <strain>AX4</strain>
    </source>
</reference>
<sequence>MAMKLLECFEFKNTYITKTPIVIVIDNDKIIPNFDRKDGSPLFFKIVNFI</sequence>
<name>Y7397_DICDI</name>